<comment type="function">
    <text>Required for the biogenesis of c-type cytochromes. Possible subunit of a heme lyase.</text>
</comment>
<comment type="subcellular location">
    <subcellularLocation>
        <location evidence="2">Periplasm</location>
    </subcellularLocation>
</comment>
<comment type="similarity">
    <text evidence="2">Belongs to the CcmH/CycL/Ccl2/NrfF family.</text>
</comment>
<accession>Q00501</accession>
<accession>D5AR56</accession>
<sequence>MLKRLLLLLVLATPVHAVQPDEVLSDPGLEARARQISQVLRCPVCQGENIDESNAGVSRDLRLAVRERLVAGDSDAQVIDYIKDRFGEYVLFEPERRGANLILYWIGPAVLVVALGGIFLWLRGRRREEEPVPVLSAEEEARLKDLLKD</sequence>
<dbReference type="EMBL" id="X63461">
    <property type="protein sequence ID" value="CAA45059.1"/>
    <property type="molecule type" value="Genomic_DNA"/>
</dbReference>
<dbReference type="EMBL" id="CP001312">
    <property type="protein sequence ID" value="ADE86861.1"/>
    <property type="molecule type" value="Genomic_DNA"/>
</dbReference>
<dbReference type="PIR" id="S23668">
    <property type="entry name" value="S23668"/>
</dbReference>
<dbReference type="RefSeq" id="WP_013068834.1">
    <property type="nucleotide sequence ID" value="NC_014034.1"/>
</dbReference>
<dbReference type="SMR" id="Q00501"/>
<dbReference type="STRING" id="272942.RCAP_rcc03137"/>
<dbReference type="GeneID" id="31491924"/>
<dbReference type="KEGG" id="rcp:RCAP_rcc03137"/>
<dbReference type="eggNOG" id="COG3088">
    <property type="taxonomic scope" value="Bacteria"/>
</dbReference>
<dbReference type="HOGENOM" id="CLU_107187_2_0_5"/>
<dbReference type="OrthoDB" id="9804975at2"/>
<dbReference type="Proteomes" id="UP000002361">
    <property type="component" value="Chromosome"/>
</dbReference>
<dbReference type="GO" id="GO:0042597">
    <property type="term" value="C:periplasmic space"/>
    <property type="evidence" value="ECO:0007669"/>
    <property type="project" value="UniProtKB-SubCell"/>
</dbReference>
<dbReference type="GO" id="GO:0005886">
    <property type="term" value="C:plasma membrane"/>
    <property type="evidence" value="ECO:0007669"/>
    <property type="project" value="TreeGrafter"/>
</dbReference>
<dbReference type="GO" id="GO:0046872">
    <property type="term" value="F:metal ion binding"/>
    <property type="evidence" value="ECO:0007669"/>
    <property type="project" value="UniProtKB-KW"/>
</dbReference>
<dbReference type="GO" id="GO:0017004">
    <property type="term" value="P:cytochrome complex assembly"/>
    <property type="evidence" value="ECO:0007669"/>
    <property type="project" value="UniProtKB-KW"/>
</dbReference>
<dbReference type="CDD" id="cd16378">
    <property type="entry name" value="CcmH_N"/>
    <property type="match status" value="1"/>
</dbReference>
<dbReference type="Gene3D" id="1.10.8.640">
    <property type="entry name" value="Cytochrome C biogenesis protein"/>
    <property type="match status" value="1"/>
</dbReference>
<dbReference type="InterPro" id="IPR051263">
    <property type="entry name" value="C-type_cytochrome_biogenesis"/>
</dbReference>
<dbReference type="InterPro" id="IPR005616">
    <property type="entry name" value="CcmH/CycL/Ccl2/NrfF_N"/>
</dbReference>
<dbReference type="InterPro" id="IPR038297">
    <property type="entry name" value="CcmH/CycL/NrfF/Ccl2_sf"/>
</dbReference>
<dbReference type="PANTHER" id="PTHR47870">
    <property type="entry name" value="CYTOCHROME C-TYPE BIOGENESIS PROTEIN CCMH"/>
    <property type="match status" value="1"/>
</dbReference>
<dbReference type="PANTHER" id="PTHR47870:SF1">
    <property type="entry name" value="CYTOCHROME C-TYPE BIOGENESIS PROTEIN CCMH"/>
    <property type="match status" value="1"/>
</dbReference>
<dbReference type="Pfam" id="PF03918">
    <property type="entry name" value="CcmH"/>
    <property type="match status" value="1"/>
</dbReference>
<feature type="signal peptide" evidence="1">
    <location>
        <begin position="1"/>
        <end position="17"/>
    </location>
</feature>
<feature type="chain" id="PRO_0000006611" description="Cytochrome c-type biogenesis protein Ccl2">
    <location>
        <begin position="18"/>
        <end position="149"/>
    </location>
</feature>
<feature type="binding site" description="covalent" evidence="1">
    <location>
        <position position="42"/>
    </location>
    <ligand>
        <name>heme</name>
        <dbReference type="ChEBI" id="CHEBI:30413"/>
    </ligand>
</feature>
<feature type="binding site" description="covalent" evidence="1">
    <location>
        <position position="45"/>
    </location>
    <ligand>
        <name>heme</name>
        <dbReference type="ChEBI" id="CHEBI:30413"/>
    </ligand>
</feature>
<gene>
    <name type="primary">ccl2</name>
    <name type="synonym">ccmH</name>
    <name type="ordered locus">RCAP_rcc03137</name>
</gene>
<proteinExistence type="inferred from homology"/>
<keyword id="KW-0201">Cytochrome c-type biogenesis</keyword>
<keyword id="KW-0349">Heme</keyword>
<keyword id="KW-0408">Iron</keyword>
<keyword id="KW-0479">Metal-binding</keyword>
<keyword id="KW-0574">Periplasm</keyword>
<keyword id="KW-1185">Reference proteome</keyword>
<keyword id="KW-0732">Signal</keyword>
<reference key="1">
    <citation type="journal article" date="1992" name="Genes Dev.">
        <title>Bacterial cytochromes c biogenesis.</title>
        <authorList>
            <person name="Beckman D.L."/>
            <person name="Trawick D.R."/>
            <person name="Kranz R.G."/>
        </authorList>
    </citation>
    <scope>NUCLEOTIDE SEQUENCE [GENOMIC DNA]</scope>
    <source>
        <strain>ATCC BAA-309 / NBRC 16581 / SB1003</strain>
    </source>
</reference>
<reference key="2">
    <citation type="journal article" date="2010" name="J. Bacteriol.">
        <title>Complete genome sequence of the photosynthetic purple nonsulfur bacterium Rhodobacter capsulatus SB 1003.</title>
        <authorList>
            <person name="Strnad H."/>
            <person name="Lapidus A."/>
            <person name="Paces J."/>
            <person name="Ulbrich P."/>
            <person name="Vlcek C."/>
            <person name="Paces V."/>
            <person name="Haselkorn R."/>
        </authorList>
    </citation>
    <scope>NUCLEOTIDE SEQUENCE [LARGE SCALE GENOMIC DNA]</scope>
    <source>
        <strain>ATCC BAA-309 / NBRC 16581 / SB1003</strain>
    </source>
</reference>
<protein>
    <recommendedName>
        <fullName>Cytochrome c-type biogenesis protein Ccl2</fullName>
    </recommendedName>
</protein>
<name>CCMH_RHOCB</name>
<evidence type="ECO:0000255" key="1"/>
<evidence type="ECO:0000305" key="2"/>
<organism>
    <name type="scientific">Rhodobacter capsulatus (strain ATCC BAA-309 / NBRC 16581 / SB1003)</name>
    <dbReference type="NCBI Taxonomy" id="272942"/>
    <lineage>
        <taxon>Bacteria</taxon>
        <taxon>Pseudomonadati</taxon>
        <taxon>Pseudomonadota</taxon>
        <taxon>Alphaproteobacteria</taxon>
        <taxon>Rhodobacterales</taxon>
        <taxon>Rhodobacter group</taxon>
        <taxon>Rhodobacter</taxon>
    </lineage>
</organism>